<sequence>MADLVSSCKDKLAYFRIKELKDILNQLGLPKQGKKQDLIDRVLALLTDEQGQRHHGWGRKNSLTKEAVAKIVDDTYRKMQIQCAPDLATRSHSGSDFSFRPIEEAYDSFQPEAKVRCICSSTMVNDSMIQCEDQRCQVWQHLNCVLIPDKPGESAEVPPVFYCELCRLSRADPFWVTAGNPLLPVKFVSSGVTNDGTSVPQSVEKSFQLSRSDRETVQRQEYDLQVWCMLLNDKVQFRMQWPQYAELHVNGISVRVVTRPGSQLLGINGRDDGPLITTCSREGINKICLSRVDARTFCFGVRIAKRRTVAQVLNLVPKEAEGESFEHALARVRRCLGGGDTAENADSDSDLEVVAESVTVNLRCPNSGSRMRIAGRFKPCIHMGCFDLETFVELNQRSRKWQCPICLKNYSLESLMIDPYFNRITSLLRNCNEDVNEVDVKPDGSWRVKGDAASRELSQWHMPDGTLCNPKEDVKPAMQNGNEQMMEGTSDGQKSLKIGIKRNPNGIWEVSSKADDKKPSVVGNRMQNNSGFRALNNIMHMSNSPTSSYRDGEDPSVNQESNRHVDLSLNNGNNEFDSFSLNFGQACNTDDRPQQQHNATDVIVLSDSDEENDAMVCPPAVYDNTTTANGSGFPFTTNGIGYTERYQEDAGVGTSGLGLLSNNVDDFEMNNWQMHSSYQQPEQGFQFFGNDTDVHNTFVGSHNSFGLAPNDYSLDCNVGVEEASVTPALSVCRNSNEMHGSLVDNPLALVGDDPSLQIFLPSQPSSVPLQEELSERANAPNGVQSDDWISLTLAAGGGGNEEPAPADVNSQPQIPSTETGIEPLTDAASAFLSTNIERRSGADLNPRRIENIFSHPRQPRSVRPRLCLSIDTDSE</sequence>
<feature type="chain" id="PRO_0000383459" description="E3 SUMO-protein ligase SIZ1">
    <location>
        <begin position="1"/>
        <end position="875"/>
    </location>
</feature>
<feature type="domain" description="SAP" evidence="2">
    <location>
        <begin position="12"/>
        <end position="46"/>
    </location>
</feature>
<feature type="zinc finger region" description="PHD-type">
    <location>
        <begin position="114"/>
        <end position="169"/>
    </location>
</feature>
<feature type="zinc finger region" description="SP-RING-type" evidence="3">
    <location>
        <begin position="349"/>
        <end position="430"/>
    </location>
</feature>
<feature type="region of interest" description="Disordered" evidence="4">
    <location>
        <begin position="796"/>
        <end position="820"/>
    </location>
</feature>
<feature type="compositionally biased region" description="Polar residues" evidence="4">
    <location>
        <begin position="808"/>
        <end position="819"/>
    </location>
</feature>
<feature type="binding site" evidence="3">
    <location>
        <position position="380"/>
    </location>
    <ligand>
        <name>Zn(2+)</name>
        <dbReference type="ChEBI" id="CHEBI:29105"/>
    </ligand>
</feature>
<feature type="binding site" evidence="3">
    <location>
        <position position="382"/>
    </location>
    <ligand>
        <name>Zn(2+)</name>
        <dbReference type="ChEBI" id="CHEBI:29105"/>
    </ligand>
</feature>
<feature type="binding site" evidence="3">
    <location>
        <position position="403"/>
    </location>
    <ligand>
        <name>Zn(2+)</name>
        <dbReference type="ChEBI" id="CHEBI:29105"/>
    </ligand>
</feature>
<feature type="binding site" evidence="3">
    <location>
        <position position="406"/>
    </location>
    <ligand>
        <name>Zn(2+)</name>
        <dbReference type="ChEBI" id="CHEBI:29105"/>
    </ligand>
</feature>
<feature type="helix" evidence="6">
    <location>
        <begin position="2"/>
        <end position="14"/>
    </location>
</feature>
<feature type="helix" evidence="6">
    <location>
        <begin position="17"/>
        <end position="27"/>
    </location>
</feature>
<feature type="helix" evidence="6">
    <location>
        <begin position="35"/>
        <end position="47"/>
    </location>
</feature>
<feature type="helix" evidence="6">
    <location>
        <begin position="61"/>
        <end position="63"/>
    </location>
</feature>
<feature type="helix" evidence="6">
    <location>
        <begin position="65"/>
        <end position="80"/>
    </location>
</feature>
<feature type="strand" evidence="6">
    <location>
        <begin position="95"/>
        <end position="97"/>
    </location>
</feature>
<feature type="strand" evidence="7">
    <location>
        <begin position="128"/>
        <end position="130"/>
    </location>
</feature>
<feature type="turn" evidence="7">
    <location>
        <begin position="134"/>
        <end position="136"/>
    </location>
</feature>
<feature type="strand" evidence="7">
    <location>
        <begin position="138"/>
        <end position="141"/>
    </location>
</feature>
<feature type="turn" evidence="7">
    <location>
        <begin position="142"/>
        <end position="144"/>
    </location>
</feature>
<feature type="helix" evidence="7">
    <location>
        <begin position="164"/>
        <end position="170"/>
    </location>
</feature>
<accession>Q6L4L4</accession>
<accession>A0A0P0WHD5</accession>
<evidence type="ECO:0000250" key="1"/>
<evidence type="ECO:0000255" key="2">
    <source>
        <dbReference type="PROSITE-ProRule" id="PRU00186"/>
    </source>
</evidence>
<evidence type="ECO:0000255" key="3">
    <source>
        <dbReference type="PROSITE-ProRule" id="PRU00452"/>
    </source>
</evidence>
<evidence type="ECO:0000256" key="4">
    <source>
        <dbReference type="SAM" id="MobiDB-lite"/>
    </source>
</evidence>
<evidence type="ECO:0000305" key="5"/>
<evidence type="ECO:0007829" key="6">
    <source>
        <dbReference type="PDB" id="2RNO"/>
    </source>
</evidence>
<evidence type="ECO:0007829" key="7">
    <source>
        <dbReference type="PDB" id="2RSD"/>
    </source>
</evidence>
<keyword id="KW-0002">3D-structure</keyword>
<keyword id="KW-0479">Metal-binding</keyword>
<keyword id="KW-0539">Nucleus</keyword>
<keyword id="KW-1185">Reference proteome</keyword>
<keyword id="KW-0808">Transferase</keyword>
<keyword id="KW-0833">Ubl conjugation pathway</keyword>
<keyword id="KW-0862">Zinc</keyword>
<keyword id="KW-0863">Zinc-finger</keyword>
<proteinExistence type="evidence at protein level"/>
<comment type="function">
    <text evidence="1">Probable SUMO E3 ligase that may regulate Pi starvation responses.</text>
</comment>
<comment type="pathway">
    <text>Protein modification; protein sumoylation.</text>
</comment>
<comment type="interaction">
    <interactant intactId="EBI-7896966">
        <id>Q6L4L4</id>
    </interactant>
    <interactant intactId="EBI-7896995">
        <id>Q0JCT1</id>
        <label>H3</label>
    </interactant>
    <organismsDiffer>false</organismsDiffer>
    <experiments>5</experiments>
</comment>
<comment type="subcellular location">
    <subcellularLocation>
        <location evidence="1">Nucleus</location>
    </subcellularLocation>
</comment>
<comment type="similarity">
    <text evidence="5">Belongs to the PIAS family.</text>
</comment>
<name>SIZ1_ORYSJ</name>
<organism>
    <name type="scientific">Oryza sativa subsp. japonica</name>
    <name type="common">Rice</name>
    <dbReference type="NCBI Taxonomy" id="39947"/>
    <lineage>
        <taxon>Eukaryota</taxon>
        <taxon>Viridiplantae</taxon>
        <taxon>Streptophyta</taxon>
        <taxon>Embryophyta</taxon>
        <taxon>Tracheophyta</taxon>
        <taxon>Spermatophyta</taxon>
        <taxon>Magnoliopsida</taxon>
        <taxon>Liliopsida</taxon>
        <taxon>Poales</taxon>
        <taxon>Poaceae</taxon>
        <taxon>BOP clade</taxon>
        <taxon>Oryzoideae</taxon>
        <taxon>Oryzeae</taxon>
        <taxon>Oryzinae</taxon>
        <taxon>Oryza</taxon>
        <taxon>Oryza sativa</taxon>
    </lineage>
</organism>
<protein>
    <recommendedName>
        <fullName>E3 SUMO-protein ligase SIZ1</fullName>
        <ecNumber>2.3.2.-</ecNumber>
    </recommendedName>
    <alternativeName>
        <fullName evidence="5">E3 SUMO-protein transferase SIZ1</fullName>
    </alternativeName>
</protein>
<reference key="1">
    <citation type="journal article" date="2005" name="Mol. Genet. Genomics">
        <title>A fine physical map of the rice chromosome 5.</title>
        <authorList>
            <person name="Cheng C.-H."/>
            <person name="Chung M.C."/>
            <person name="Liu S.-M."/>
            <person name="Chen S.-K."/>
            <person name="Kao F.Y."/>
            <person name="Lin S.-J."/>
            <person name="Hsiao S.-H."/>
            <person name="Tseng I.C."/>
            <person name="Hsing Y.-I.C."/>
            <person name="Wu H.-P."/>
            <person name="Chen C.-S."/>
            <person name="Shaw J.-F."/>
            <person name="Wu J."/>
            <person name="Matsumoto T."/>
            <person name="Sasaki T."/>
            <person name="Chen H.-C."/>
            <person name="Chow T.-Y."/>
        </authorList>
    </citation>
    <scope>NUCLEOTIDE SEQUENCE [LARGE SCALE GENOMIC DNA]</scope>
    <source>
        <strain>cv. Nipponbare</strain>
    </source>
</reference>
<reference key="2">
    <citation type="journal article" date="2005" name="Nature">
        <title>The map-based sequence of the rice genome.</title>
        <authorList>
            <consortium name="International rice genome sequencing project (IRGSP)"/>
        </authorList>
    </citation>
    <scope>NUCLEOTIDE SEQUENCE [LARGE SCALE GENOMIC DNA]</scope>
    <source>
        <strain>cv. Nipponbare</strain>
    </source>
</reference>
<reference key="3">
    <citation type="journal article" date="2008" name="Nucleic Acids Res.">
        <title>The rice annotation project database (RAP-DB): 2008 update.</title>
        <authorList>
            <consortium name="The rice annotation project (RAP)"/>
        </authorList>
    </citation>
    <scope>GENOME REANNOTATION</scope>
    <source>
        <strain>cv. Nipponbare</strain>
    </source>
</reference>
<reference key="4">
    <citation type="journal article" date="2013" name="Rice">
        <title>Improvement of the Oryza sativa Nipponbare reference genome using next generation sequence and optical map data.</title>
        <authorList>
            <person name="Kawahara Y."/>
            <person name="de la Bastide M."/>
            <person name="Hamilton J.P."/>
            <person name="Kanamori H."/>
            <person name="McCombie W.R."/>
            <person name="Ouyang S."/>
            <person name="Schwartz D.C."/>
            <person name="Tanaka T."/>
            <person name="Wu J."/>
            <person name="Zhou S."/>
            <person name="Childs K.L."/>
            <person name="Davidson R.M."/>
            <person name="Lin H."/>
            <person name="Quesada-Ocampo L."/>
            <person name="Vaillancourt B."/>
            <person name="Sakai H."/>
            <person name="Lee S.S."/>
            <person name="Kim J."/>
            <person name="Numa H."/>
            <person name="Itoh T."/>
            <person name="Buell C.R."/>
            <person name="Matsumoto T."/>
        </authorList>
    </citation>
    <scope>GENOME REANNOTATION</scope>
    <source>
        <strain>cv. Nipponbare</strain>
    </source>
</reference>
<reference key="5">
    <citation type="journal article" date="2003" name="Science">
        <title>Collection, mapping, and annotation of over 28,000 cDNA clones from japonica rice.</title>
        <authorList>
            <consortium name="The rice full-length cDNA consortium"/>
        </authorList>
    </citation>
    <scope>NUCLEOTIDE SEQUENCE [LARGE SCALE MRNA]</scope>
    <source>
        <strain>cv. Nipponbare</strain>
    </source>
</reference>
<reference key="6">
    <citation type="journal article" date="2009" name="Proteins">
        <title>Solution structures and DNA binding properties of the N-terminal SAP domains of SUMO E3 ligases from Saccharomyces cerevisiae and Oryza sativa.</title>
        <authorList>
            <person name="Suzuki R."/>
            <person name="Shindo H."/>
            <person name="Tase A."/>
            <person name="Kikuchi Y."/>
            <person name="Shimizu M."/>
            <person name="Yamazaki T."/>
        </authorList>
    </citation>
    <scope>STRUCTURE BY NMR OF 2-105</scope>
</reference>
<dbReference type="EC" id="2.3.2.-"/>
<dbReference type="EMBL" id="AC134931">
    <property type="protein sequence ID" value="AAT39226.1"/>
    <property type="molecule type" value="Genomic_DNA"/>
</dbReference>
<dbReference type="EMBL" id="AP008211">
    <property type="protein sequence ID" value="BAF16431.1"/>
    <property type="molecule type" value="Genomic_DNA"/>
</dbReference>
<dbReference type="EMBL" id="AP014961">
    <property type="protein sequence ID" value="BAS92058.1"/>
    <property type="molecule type" value="Genomic_DNA"/>
</dbReference>
<dbReference type="EMBL" id="AK105290">
    <property type="protein sequence ID" value="BAG97182.1"/>
    <property type="molecule type" value="mRNA"/>
</dbReference>
<dbReference type="RefSeq" id="XP_015639641.1">
    <property type="nucleotide sequence ID" value="XM_015784155.1"/>
</dbReference>
<dbReference type="PDB" id="2RNO">
    <property type="method" value="NMR"/>
    <property type="chains" value="A=2-105"/>
</dbReference>
<dbReference type="PDB" id="2RSD">
    <property type="method" value="NMR"/>
    <property type="chains" value="A=107-172"/>
</dbReference>
<dbReference type="PDBsum" id="2RNO"/>
<dbReference type="PDBsum" id="2RSD"/>
<dbReference type="BMRB" id="Q6L4L4"/>
<dbReference type="SMR" id="Q6L4L4"/>
<dbReference type="BioGRID" id="806709">
    <property type="interactions" value="1"/>
</dbReference>
<dbReference type="FunCoup" id="Q6L4L4">
    <property type="interactions" value="1073"/>
</dbReference>
<dbReference type="IntAct" id="Q6L4L4">
    <property type="interactions" value="1"/>
</dbReference>
<dbReference type="MINT" id="Q6L4L4"/>
<dbReference type="STRING" id="39947.Q6L4L4"/>
<dbReference type="PaxDb" id="39947-Q6L4L4"/>
<dbReference type="EnsemblPlants" id="Os05t0125000-01">
    <property type="protein sequence ID" value="Os05t0125000-01"/>
    <property type="gene ID" value="Os05g0125000"/>
</dbReference>
<dbReference type="Gramene" id="Os05t0125000-01">
    <property type="protein sequence ID" value="Os05t0125000-01"/>
    <property type="gene ID" value="Os05g0125000"/>
</dbReference>
<dbReference type="KEGG" id="dosa:Os05g0125000"/>
<dbReference type="eggNOG" id="KOG2169">
    <property type="taxonomic scope" value="Eukaryota"/>
</dbReference>
<dbReference type="HOGENOM" id="CLU_015870_2_0_1"/>
<dbReference type="InParanoid" id="Q6L4L4"/>
<dbReference type="OMA" id="NNIMHMS"/>
<dbReference type="OrthoDB" id="28127at2759"/>
<dbReference type="PlantReactome" id="R-OSA-8879007">
    <property type="pathway name" value="Response to cold temperature"/>
</dbReference>
<dbReference type="UniPathway" id="UPA00886"/>
<dbReference type="EvolutionaryTrace" id="Q6L4L4"/>
<dbReference type="Proteomes" id="UP000000763">
    <property type="component" value="Chromosome 5"/>
</dbReference>
<dbReference type="Proteomes" id="UP000059680">
    <property type="component" value="Chromosome 5"/>
</dbReference>
<dbReference type="GO" id="GO:0000785">
    <property type="term" value="C:chromatin"/>
    <property type="evidence" value="ECO:0000318"/>
    <property type="project" value="GO_Central"/>
</dbReference>
<dbReference type="GO" id="GO:0005634">
    <property type="term" value="C:nucleus"/>
    <property type="evidence" value="ECO:0007669"/>
    <property type="project" value="UniProtKB-SubCell"/>
</dbReference>
<dbReference type="GO" id="GO:0061665">
    <property type="term" value="F:SUMO ligase activity"/>
    <property type="evidence" value="ECO:0000314"/>
    <property type="project" value="CACAO"/>
</dbReference>
<dbReference type="GO" id="GO:0008270">
    <property type="term" value="F:zinc ion binding"/>
    <property type="evidence" value="ECO:0007669"/>
    <property type="project" value="UniProtKB-KW"/>
</dbReference>
<dbReference type="GO" id="GO:0016925">
    <property type="term" value="P:protein sumoylation"/>
    <property type="evidence" value="ECO:0000314"/>
    <property type="project" value="CACAO"/>
</dbReference>
<dbReference type="CDD" id="cd15570">
    <property type="entry name" value="PHD_Bye1p_SIZ1_like"/>
    <property type="match status" value="1"/>
</dbReference>
<dbReference type="CDD" id="cd16792">
    <property type="entry name" value="SP-RING_Siz-like"/>
    <property type="match status" value="1"/>
</dbReference>
<dbReference type="FunFam" id="1.10.720.30:FF:000014">
    <property type="entry name" value="E3 SUMO-protein ligase SIZ1"/>
    <property type="match status" value="1"/>
</dbReference>
<dbReference type="FunFam" id="3.30.40.10:FF:000241">
    <property type="entry name" value="E3 SUMO-protein ligase SIZ2"/>
    <property type="match status" value="1"/>
</dbReference>
<dbReference type="Gene3D" id="1.10.720.30">
    <property type="entry name" value="SAP domain"/>
    <property type="match status" value="1"/>
</dbReference>
<dbReference type="Gene3D" id="3.30.40.10">
    <property type="entry name" value="Zinc/RING finger domain, C3HC4 (zinc finger)"/>
    <property type="match status" value="2"/>
</dbReference>
<dbReference type="InterPro" id="IPR003034">
    <property type="entry name" value="SAP_dom"/>
</dbReference>
<dbReference type="InterPro" id="IPR036361">
    <property type="entry name" value="SAP_dom_sf"/>
</dbReference>
<dbReference type="InterPro" id="IPR031141">
    <property type="entry name" value="SIZ1/2_SP-RING"/>
</dbReference>
<dbReference type="InterPro" id="IPR019786">
    <property type="entry name" value="Zinc_finger_PHD-type_CS"/>
</dbReference>
<dbReference type="InterPro" id="IPR011011">
    <property type="entry name" value="Znf_FYVE_PHD"/>
</dbReference>
<dbReference type="InterPro" id="IPR004181">
    <property type="entry name" value="Znf_MIZ"/>
</dbReference>
<dbReference type="InterPro" id="IPR001965">
    <property type="entry name" value="Znf_PHD"/>
</dbReference>
<dbReference type="InterPro" id="IPR019787">
    <property type="entry name" value="Znf_PHD-finger"/>
</dbReference>
<dbReference type="InterPro" id="IPR013083">
    <property type="entry name" value="Znf_RING/FYVE/PHD"/>
</dbReference>
<dbReference type="PANTHER" id="PTHR10782:SF102">
    <property type="entry name" value="E3 SUMO-PROTEIN LIGASE SIZ1"/>
    <property type="match status" value="1"/>
</dbReference>
<dbReference type="PANTHER" id="PTHR10782">
    <property type="entry name" value="ZINC FINGER MIZ DOMAIN-CONTAINING PROTEIN"/>
    <property type="match status" value="1"/>
</dbReference>
<dbReference type="Pfam" id="PF00628">
    <property type="entry name" value="PHD"/>
    <property type="match status" value="1"/>
</dbReference>
<dbReference type="Pfam" id="PF02037">
    <property type="entry name" value="SAP"/>
    <property type="match status" value="1"/>
</dbReference>
<dbReference type="Pfam" id="PF02891">
    <property type="entry name" value="zf-MIZ"/>
    <property type="match status" value="1"/>
</dbReference>
<dbReference type="SMART" id="SM00249">
    <property type="entry name" value="PHD"/>
    <property type="match status" value="1"/>
</dbReference>
<dbReference type="SMART" id="SM00513">
    <property type="entry name" value="SAP"/>
    <property type="match status" value="1"/>
</dbReference>
<dbReference type="SUPFAM" id="SSF57903">
    <property type="entry name" value="FYVE/PHD zinc finger"/>
    <property type="match status" value="1"/>
</dbReference>
<dbReference type="SUPFAM" id="SSF68906">
    <property type="entry name" value="SAP domain"/>
    <property type="match status" value="1"/>
</dbReference>
<dbReference type="PROSITE" id="PS50800">
    <property type="entry name" value="SAP"/>
    <property type="match status" value="1"/>
</dbReference>
<dbReference type="PROSITE" id="PS01359">
    <property type="entry name" value="ZF_PHD_1"/>
    <property type="match status" value="1"/>
</dbReference>
<dbReference type="PROSITE" id="PS51044">
    <property type="entry name" value="ZF_SP_RING"/>
    <property type="match status" value="1"/>
</dbReference>
<gene>
    <name type="primary">SIZ1</name>
    <name type="ordered locus">Os05g0125000</name>
    <name type="ordered locus">LOC_Os05g03430</name>
    <name type="ORF">OSJNBb0079L11.3</name>
</gene>